<dbReference type="EMBL" id="AJ002057">
    <property type="protein sequence ID" value="CAA05161.1"/>
    <property type="molecule type" value="mRNA"/>
</dbReference>
<dbReference type="PIR" id="T14554">
    <property type="entry name" value="T14554"/>
</dbReference>
<dbReference type="RefSeq" id="NP_001289994.1">
    <property type="nucleotide sequence ID" value="NM_001303065.1"/>
</dbReference>
<dbReference type="SMR" id="O81919"/>
<dbReference type="GeneID" id="104890403"/>
<dbReference type="KEGG" id="bvg:104890403"/>
<dbReference type="OMA" id="GEWIHTS"/>
<dbReference type="PhylomeDB" id="O81919"/>
<dbReference type="GO" id="GO:0005788">
    <property type="term" value="C:endoplasmic reticulum lumen"/>
    <property type="evidence" value="ECO:0007669"/>
    <property type="project" value="UniProtKB-SubCell"/>
</dbReference>
<dbReference type="GO" id="GO:0005789">
    <property type="term" value="C:endoplasmic reticulum membrane"/>
    <property type="evidence" value="ECO:0007669"/>
    <property type="project" value="TreeGrafter"/>
</dbReference>
<dbReference type="GO" id="GO:0005509">
    <property type="term" value="F:calcium ion binding"/>
    <property type="evidence" value="ECO:0007669"/>
    <property type="project" value="InterPro"/>
</dbReference>
<dbReference type="GO" id="GO:0030246">
    <property type="term" value="F:carbohydrate binding"/>
    <property type="evidence" value="ECO:0007669"/>
    <property type="project" value="UniProtKB-KW"/>
</dbReference>
<dbReference type="GO" id="GO:0051082">
    <property type="term" value="F:unfolded protein binding"/>
    <property type="evidence" value="ECO:0007669"/>
    <property type="project" value="InterPro"/>
</dbReference>
<dbReference type="GO" id="GO:0036503">
    <property type="term" value="P:ERAD pathway"/>
    <property type="evidence" value="ECO:0007669"/>
    <property type="project" value="TreeGrafter"/>
</dbReference>
<dbReference type="GO" id="GO:0006457">
    <property type="term" value="P:protein folding"/>
    <property type="evidence" value="ECO:0007669"/>
    <property type="project" value="InterPro"/>
</dbReference>
<dbReference type="FunFam" id="2.10.250.10:FF:000002">
    <property type="entry name" value="Calreticulin"/>
    <property type="match status" value="1"/>
</dbReference>
<dbReference type="FunFam" id="2.60.120.200:FF:000018">
    <property type="entry name" value="Calreticulin 1b"/>
    <property type="match status" value="1"/>
</dbReference>
<dbReference type="Gene3D" id="2.60.120.200">
    <property type="match status" value="1"/>
</dbReference>
<dbReference type="Gene3D" id="2.10.250.10">
    <property type="entry name" value="Calreticulin/calnexin, P domain"/>
    <property type="match status" value="1"/>
</dbReference>
<dbReference type="InterPro" id="IPR001580">
    <property type="entry name" value="Calret/calnex"/>
</dbReference>
<dbReference type="InterPro" id="IPR018124">
    <property type="entry name" value="Calret/calnex_CS"/>
</dbReference>
<dbReference type="InterPro" id="IPR009169">
    <property type="entry name" value="Calreticulin"/>
</dbReference>
<dbReference type="InterPro" id="IPR009033">
    <property type="entry name" value="Calreticulin/calnexin_P_dom_sf"/>
</dbReference>
<dbReference type="InterPro" id="IPR013320">
    <property type="entry name" value="ConA-like_dom_sf"/>
</dbReference>
<dbReference type="PANTHER" id="PTHR11073:SF2">
    <property type="entry name" value="CALRETICULIN"/>
    <property type="match status" value="1"/>
</dbReference>
<dbReference type="PANTHER" id="PTHR11073">
    <property type="entry name" value="CALRETICULIN AND CALNEXIN"/>
    <property type="match status" value="1"/>
</dbReference>
<dbReference type="Pfam" id="PF00262">
    <property type="entry name" value="Calreticulin"/>
    <property type="match status" value="2"/>
</dbReference>
<dbReference type="PIRSF" id="PIRSF002356">
    <property type="entry name" value="Calreticulin"/>
    <property type="match status" value="1"/>
</dbReference>
<dbReference type="PRINTS" id="PR00626">
    <property type="entry name" value="CALRETICULIN"/>
</dbReference>
<dbReference type="SUPFAM" id="SSF49899">
    <property type="entry name" value="Concanavalin A-like lectins/glucanases"/>
    <property type="match status" value="1"/>
</dbReference>
<dbReference type="SUPFAM" id="SSF63887">
    <property type="entry name" value="P-domain of calnexin/calreticulin"/>
    <property type="match status" value="1"/>
</dbReference>
<dbReference type="PROSITE" id="PS00803">
    <property type="entry name" value="CALRETICULIN_1"/>
    <property type="match status" value="1"/>
</dbReference>
<dbReference type="PROSITE" id="PS00804">
    <property type="entry name" value="CALRETICULIN_2"/>
    <property type="match status" value="1"/>
</dbReference>
<dbReference type="PROSITE" id="PS00805">
    <property type="entry name" value="CALRETICULIN_REPEAT"/>
    <property type="match status" value="2"/>
</dbReference>
<dbReference type="PROSITE" id="PS00014">
    <property type="entry name" value="ER_TARGET"/>
    <property type="match status" value="1"/>
</dbReference>
<keyword id="KW-0106">Calcium</keyword>
<keyword id="KW-0143">Chaperone</keyword>
<keyword id="KW-1015">Disulfide bond</keyword>
<keyword id="KW-0256">Endoplasmic reticulum</keyword>
<keyword id="KW-0325">Glycoprotein</keyword>
<keyword id="KW-0430">Lectin</keyword>
<keyword id="KW-0479">Metal-binding</keyword>
<keyword id="KW-0677">Repeat</keyword>
<keyword id="KW-0732">Signal</keyword>
<keyword id="KW-0862">Zinc</keyword>
<evidence type="ECO:0000250" key="1"/>
<evidence type="ECO:0000250" key="2">
    <source>
        <dbReference type="UniProtKB" id="P14211"/>
    </source>
</evidence>
<evidence type="ECO:0000255" key="3"/>
<evidence type="ECO:0000255" key="4">
    <source>
        <dbReference type="PROSITE-ProRule" id="PRU10138"/>
    </source>
</evidence>
<evidence type="ECO:0000256" key="5">
    <source>
        <dbReference type="SAM" id="MobiDB-lite"/>
    </source>
</evidence>
<evidence type="ECO:0000305" key="6"/>
<proteinExistence type="evidence at transcript level"/>
<sequence>MENRGRNPSFLSLLLLLSLFAIASAKVFFEERFEDGWEKRWVKSEWKKDESMAGEWNYTSGKWNGDANDKGIQTSEDYRFYAISAEFPEFSNKDNTLVFQFSVKHEQKLDCGGGYMKLLSGEVDQKKFGGDTPYSIMFGPDICGYSTKKVHAIFNYNDTNHLIKKDVPCETDQLTHVYTFILRPDATYSILIDNQEKQTGSLYTDWDLLPAKKIKDPEAKKPEDWDDKEFIPDPEDKKPEGYDDIPAEITDPEAKKPEDWDDEEDGEWTAPTIPNPEYKGPWKAKKIKNPNYKGKWKAPMIDNPEFKDDPELYVYPKLRYVGVELWQVKSGTLFDNVLVCDDPEYAKQLAEETWGKQKDAEKAAFEELEKKREEEETKDDPVESDAEDEDEAEADDSDKDDADKSDDKDDDQHDEL</sequence>
<protein>
    <recommendedName>
        <fullName>Calreticulin</fullName>
    </recommendedName>
</protein>
<accession>O81919</accession>
<name>CALR_BETVU</name>
<reference key="1">
    <citation type="submission" date="1997-10" db="EMBL/GenBank/DDBJ databases">
        <title>Nucleotide sequence from sugar beet calreticulin.</title>
        <authorList>
            <person name="Viereck R."/>
        </authorList>
    </citation>
    <scope>NUCLEOTIDE SEQUENCE [MRNA]</scope>
    <source>
        <strain>VV-D/ZR5</strain>
        <tissue>Leaf</tissue>
    </source>
</reference>
<comment type="function">
    <text evidence="1">Molecular calcium-binding chaperone promoting folding, oligomeric assembly and quality control in the ER via the calreticulin/calnexin cycle. This lectin may interact transiently with almost all of the monoglucosylated glycoproteins that are synthesized in the ER (By similarity).</text>
</comment>
<comment type="subcellular location">
    <subcellularLocation>
        <location evidence="4">Endoplasmic reticulum lumen</location>
    </subcellularLocation>
</comment>
<comment type="domain">
    <text evidence="1">Can be divided into a N-terminal globular domain, a proline-rich P-domain forming an elongated arm-like structure and a C-terminal acidic domain. The P-domain binds one molecule of calcium with high affinity, whereas the acidic C-domain binds multiple calcium ions with low affinity (By similarity).</text>
</comment>
<comment type="domain">
    <text evidence="1">The interaction with glycans occurs through a binding site in the globular lectin domain.</text>
</comment>
<comment type="domain">
    <text evidence="1">The zinc binding sites are localized to the N-domain.</text>
</comment>
<comment type="similarity">
    <text evidence="6">Belongs to the calreticulin family.</text>
</comment>
<organism>
    <name type="scientific">Beta vulgaris</name>
    <name type="common">Sugar beet</name>
    <dbReference type="NCBI Taxonomy" id="161934"/>
    <lineage>
        <taxon>Eukaryota</taxon>
        <taxon>Viridiplantae</taxon>
        <taxon>Streptophyta</taxon>
        <taxon>Embryophyta</taxon>
        <taxon>Tracheophyta</taxon>
        <taxon>Spermatophyta</taxon>
        <taxon>Magnoliopsida</taxon>
        <taxon>eudicotyledons</taxon>
        <taxon>Gunneridae</taxon>
        <taxon>Pentapetalae</taxon>
        <taxon>Caryophyllales</taxon>
        <taxon>Chenopodiaceae</taxon>
        <taxon>Betoideae</taxon>
        <taxon>Beta</taxon>
    </lineage>
</organism>
<feature type="signal peptide" evidence="3">
    <location>
        <begin position="1"/>
        <end position="25"/>
    </location>
</feature>
<feature type="chain" id="PRO_0000004188" description="Calreticulin">
    <location>
        <begin position="26"/>
        <end position="416"/>
    </location>
</feature>
<feature type="repeat" description="1-1">
    <location>
        <begin position="197"/>
        <end position="208"/>
    </location>
</feature>
<feature type="repeat" description="1-2">
    <location>
        <begin position="216"/>
        <end position="227"/>
    </location>
</feature>
<feature type="repeat" description="1-3">
    <location>
        <begin position="233"/>
        <end position="244"/>
    </location>
</feature>
<feature type="repeat" description="1-4">
    <location>
        <begin position="251"/>
        <end position="262"/>
    </location>
</feature>
<feature type="repeat" description="2-1">
    <location>
        <begin position="266"/>
        <end position="276"/>
    </location>
</feature>
<feature type="repeat" description="2-2">
    <location>
        <begin position="280"/>
        <end position="290"/>
    </location>
</feature>
<feature type="repeat" description="2-3">
    <location>
        <begin position="294"/>
        <end position="304"/>
    </location>
</feature>
<feature type="region of interest" description="4 X approximate repeats">
    <location>
        <begin position="197"/>
        <end position="262"/>
    </location>
</feature>
<feature type="region of interest" description="Disordered" evidence="5">
    <location>
        <begin position="217"/>
        <end position="281"/>
    </location>
</feature>
<feature type="region of interest" description="3 X approximate repeats">
    <location>
        <begin position="266"/>
        <end position="304"/>
    </location>
</feature>
<feature type="region of interest" description="Disordered" evidence="5">
    <location>
        <begin position="351"/>
        <end position="416"/>
    </location>
</feature>
<feature type="short sequence motif" description="Prevents secretion from ER" evidence="4">
    <location>
        <begin position="413"/>
        <end position="416"/>
    </location>
</feature>
<feature type="compositionally biased region" description="Basic and acidic residues" evidence="5">
    <location>
        <begin position="217"/>
        <end position="241"/>
    </location>
</feature>
<feature type="compositionally biased region" description="Basic and acidic residues" evidence="5">
    <location>
        <begin position="351"/>
        <end position="381"/>
    </location>
</feature>
<feature type="compositionally biased region" description="Acidic residues" evidence="5">
    <location>
        <begin position="382"/>
        <end position="400"/>
    </location>
</feature>
<feature type="compositionally biased region" description="Basic and acidic residues" evidence="5">
    <location>
        <begin position="401"/>
        <end position="416"/>
    </location>
</feature>
<feature type="binding site" evidence="2">
    <location>
        <position position="115"/>
    </location>
    <ligand>
        <name>an alpha-D-glucoside</name>
        <dbReference type="ChEBI" id="CHEBI:22390"/>
    </ligand>
</feature>
<feature type="binding site" evidence="2">
    <location>
        <position position="117"/>
    </location>
    <ligand>
        <name>an alpha-D-glucoside</name>
        <dbReference type="ChEBI" id="CHEBI:22390"/>
    </ligand>
</feature>
<feature type="binding site" evidence="2">
    <location>
        <position position="134"/>
    </location>
    <ligand>
        <name>an alpha-D-glucoside</name>
        <dbReference type="ChEBI" id="CHEBI:22390"/>
    </ligand>
</feature>
<feature type="binding site" evidence="2">
    <location>
        <position position="141"/>
    </location>
    <ligand>
        <name>an alpha-D-glucoside</name>
        <dbReference type="ChEBI" id="CHEBI:22390"/>
    </ligand>
</feature>
<feature type="binding site" evidence="2">
    <location>
        <position position="324"/>
    </location>
    <ligand>
        <name>an alpha-D-glucoside</name>
        <dbReference type="ChEBI" id="CHEBI:22390"/>
    </ligand>
</feature>
<feature type="glycosylation site" description="N-linked (GlcNAc...) asparagine" evidence="3">
    <location>
        <position position="57"/>
    </location>
</feature>
<feature type="glycosylation site" description="N-linked (GlcNAc...) asparagine" evidence="3">
    <location>
        <position position="157"/>
    </location>
</feature>
<feature type="disulfide bond" evidence="1">
    <location>
        <begin position="111"/>
        <end position="143"/>
    </location>
</feature>